<evidence type="ECO:0000255" key="1">
    <source>
        <dbReference type="HAMAP-Rule" id="MF_01631"/>
    </source>
</evidence>
<gene>
    <name evidence="1" type="primary">glmU</name>
    <name type="ordered locus">YPA_4164</name>
</gene>
<organism>
    <name type="scientific">Yersinia pestis bv. Antiqua (strain Antiqua)</name>
    <dbReference type="NCBI Taxonomy" id="360102"/>
    <lineage>
        <taxon>Bacteria</taxon>
        <taxon>Pseudomonadati</taxon>
        <taxon>Pseudomonadota</taxon>
        <taxon>Gammaproteobacteria</taxon>
        <taxon>Enterobacterales</taxon>
        <taxon>Yersiniaceae</taxon>
        <taxon>Yersinia</taxon>
    </lineage>
</organism>
<protein>
    <recommendedName>
        <fullName evidence="1">Bifunctional protein GlmU</fullName>
    </recommendedName>
    <domain>
        <recommendedName>
            <fullName evidence="1">UDP-N-acetylglucosamine pyrophosphorylase</fullName>
            <ecNumber evidence="1">2.7.7.23</ecNumber>
        </recommendedName>
        <alternativeName>
            <fullName evidence="1">N-acetylglucosamine-1-phosphate uridyltransferase</fullName>
        </alternativeName>
    </domain>
    <domain>
        <recommendedName>
            <fullName evidence="1">Glucosamine-1-phosphate N-acetyltransferase</fullName>
            <ecNumber evidence="1">2.3.1.157</ecNumber>
        </recommendedName>
    </domain>
</protein>
<feature type="chain" id="PRO_0000263166" description="Bifunctional protein GlmU">
    <location>
        <begin position="1"/>
        <end position="456"/>
    </location>
</feature>
<feature type="region of interest" description="Pyrophosphorylase" evidence="1">
    <location>
        <begin position="1"/>
        <end position="229"/>
    </location>
</feature>
<feature type="region of interest" description="Linker" evidence="1">
    <location>
        <begin position="230"/>
        <end position="250"/>
    </location>
</feature>
<feature type="region of interest" description="N-acetyltransferase" evidence="1">
    <location>
        <begin position="251"/>
        <end position="456"/>
    </location>
</feature>
<feature type="active site" description="Proton acceptor" evidence="1">
    <location>
        <position position="363"/>
    </location>
</feature>
<feature type="binding site" evidence="1">
    <location>
        <begin position="11"/>
        <end position="14"/>
    </location>
    <ligand>
        <name>UDP-N-acetyl-alpha-D-glucosamine</name>
        <dbReference type="ChEBI" id="CHEBI:57705"/>
    </ligand>
</feature>
<feature type="binding site" evidence="1">
    <location>
        <position position="25"/>
    </location>
    <ligand>
        <name>UDP-N-acetyl-alpha-D-glucosamine</name>
        <dbReference type="ChEBI" id="CHEBI:57705"/>
    </ligand>
</feature>
<feature type="binding site" evidence="1">
    <location>
        <position position="76"/>
    </location>
    <ligand>
        <name>UDP-N-acetyl-alpha-D-glucosamine</name>
        <dbReference type="ChEBI" id="CHEBI:57705"/>
    </ligand>
</feature>
<feature type="binding site" evidence="1">
    <location>
        <begin position="81"/>
        <end position="82"/>
    </location>
    <ligand>
        <name>UDP-N-acetyl-alpha-D-glucosamine</name>
        <dbReference type="ChEBI" id="CHEBI:57705"/>
    </ligand>
</feature>
<feature type="binding site" evidence="1">
    <location>
        <begin position="103"/>
        <end position="105"/>
    </location>
    <ligand>
        <name>UDP-N-acetyl-alpha-D-glucosamine</name>
        <dbReference type="ChEBI" id="CHEBI:57705"/>
    </ligand>
</feature>
<feature type="binding site" evidence="1">
    <location>
        <position position="105"/>
    </location>
    <ligand>
        <name>Mg(2+)</name>
        <dbReference type="ChEBI" id="CHEBI:18420"/>
    </ligand>
</feature>
<feature type="binding site" evidence="1">
    <location>
        <position position="140"/>
    </location>
    <ligand>
        <name>UDP-N-acetyl-alpha-D-glucosamine</name>
        <dbReference type="ChEBI" id="CHEBI:57705"/>
    </ligand>
</feature>
<feature type="binding site" evidence="1">
    <location>
        <position position="154"/>
    </location>
    <ligand>
        <name>UDP-N-acetyl-alpha-D-glucosamine</name>
        <dbReference type="ChEBI" id="CHEBI:57705"/>
    </ligand>
</feature>
<feature type="binding site" evidence="1">
    <location>
        <position position="169"/>
    </location>
    <ligand>
        <name>UDP-N-acetyl-alpha-D-glucosamine</name>
        <dbReference type="ChEBI" id="CHEBI:57705"/>
    </ligand>
</feature>
<feature type="binding site" evidence="1">
    <location>
        <position position="227"/>
    </location>
    <ligand>
        <name>Mg(2+)</name>
        <dbReference type="ChEBI" id="CHEBI:18420"/>
    </ligand>
</feature>
<feature type="binding site" evidence="1">
    <location>
        <position position="227"/>
    </location>
    <ligand>
        <name>UDP-N-acetyl-alpha-D-glucosamine</name>
        <dbReference type="ChEBI" id="CHEBI:57705"/>
    </ligand>
</feature>
<feature type="binding site" evidence="1">
    <location>
        <position position="333"/>
    </location>
    <ligand>
        <name>UDP-N-acetyl-alpha-D-glucosamine</name>
        <dbReference type="ChEBI" id="CHEBI:57705"/>
    </ligand>
</feature>
<feature type="binding site" evidence="1">
    <location>
        <position position="351"/>
    </location>
    <ligand>
        <name>UDP-N-acetyl-alpha-D-glucosamine</name>
        <dbReference type="ChEBI" id="CHEBI:57705"/>
    </ligand>
</feature>
<feature type="binding site" evidence="1">
    <location>
        <position position="366"/>
    </location>
    <ligand>
        <name>UDP-N-acetyl-alpha-D-glucosamine</name>
        <dbReference type="ChEBI" id="CHEBI:57705"/>
    </ligand>
</feature>
<feature type="binding site" evidence="1">
    <location>
        <position position="377"/>
    </location>
    <ligand>
        <name>UDP-N-acetyl-alpha-D-glucosamine</name>
        <dbReference type="ChEBI" id="CHEBI:57705"/>
    </ligand>
</feature>
<feature type="binding site" evidence="1">
    <location>
        <position position="380"/>
    </location>
    <ligand>
        <name>acetyl-CoA</name>
        <dbReference type="ChEBI" id="CHEBI:57288"/>
    </ligand>
</feature>
<feature type="binding site" evidence="1">
    <location>
        <begin position="386"/>
        <end position="387"/>
    </location>
    <ligand>
        <name>acetyl-CoA</name>
        <dbReference type="ChEBI" id="CHEBI:57288"/>
    </ligand>
</feature>
<feature type="binding site" evidence="1">
    <location>
        <position position="405"/>
    </location>
    <ligand>
        <name>acetyl-CoA</name>
        <dbReference type="ChEBI" id="CHEBI:57288"/>
    </ligand>
</feature>
<feature type="binding site" evidence="1">
    <location>
        <position position="423"/>
    </location>
    <ligand>
        <name>acetyl-CoA</name>
        <dbReference type="ChEBI" id="CHEBI:57288"/>
    </ligand>
</feature>
<feature type="binding site" evidence="1">
    <location>
        <position position="440"/>
    </location>
    <ligand>
        <name>acetyl-CoA</name>
        <dbReference type="ChEBI" id="CHEBI:57288"/>
    </ligand>
</feature>
<sequence length="456" mass="48840">MSNSSMSVVILAAGKGTRMYSDLPKVLHPLAGKPMVQHVIDAAMKLGAQHVHLVYGHGGELLKKTLADPSLNWVLQAEQLGTGHAMQQAAPHFADDEDILMLYGDVPLISVDTLQRLLAAKPEGGIGLLTVKLDNPSGYGRIVRENGDVVGIVEHKDASDAQREINEINTGILVANGRDLKRWLSLLDNNNAQGEFYITDIIALAHADGKKIATVHPTRLSEVEGVNNRLQLSALERVFQTEQAEKLLLAGVMLLDPSRFDLRGELTHGRDITIDTNVIIEGHVILGDRVRIGTGCVLKNCVIGDDSEISPYTVLEDARLDANCTVGPFARLRPGAELAEGAHVGNFVEIKKARLGKGSKAGHLSYLGDAEIGAGVNIGAGTITCNYDGANKFKTIIGDDVFVGSDTQLVAPVTVANGATIGAGTTVTRDVAENELVISRVKQVHIQGWKRPVKKK</sequence>
<reference key="1">
    <citation type="journal article" date="2006" name="J. Bacteriol.">
        <title>Complete genome sequence of Yersinia pestis strains Antiqua and Nepal516: evidence of gene reduction in an emerging pathogen.</title>
        <authorList>
            <person name="Chain P.S.G."/>
            <person name="Hu P."/>
            <person name="Malfatti S.A."/>
            <person name="Radnedge L."/>
            <person name="Larimer F."/>
            <person name="Vergez L.M."/>
            <person name="Worsham P."/>
            <person name="Chu M.C."/>
            <person name="Andersen G.L."/>
        </authorList>
    </citation>
    <scope>NUCLEOTIDE SEQUENCE [LARGE SCALE GENOMIC DNA]</scope>
    <source>
        <strain>Antiqua</strain>
    </source>
</reference>
<dbReference type="EC" id="2.7.7.23" evidence="1"/>
<dbReference type="EC" id="2.3.1.157" evidence="1"/>
<dbReference type="EMBL" id="CP000308">
    <property type="protein sequence ID" value="ABG16125.1"/>
    <property type="molecule type" value="Genomic_DNA"/>
</dbReference>
<dbReference type="RefSeq" id="WP_002215550.1">
    <property type="nucleotide sequence ID" value="NZ_CP009906.1"/>
</dbReference>
<dbReference type="SMR" id="Q1C097"/>
<dbReference type="GeneID" id="57974605"/>
<dbReference type="KEGG" id="ypa:YPA_4164"/>
<dbReference type="UniPathway" id="UPA00113">
    <property type="reaction ID" value="UER00532"/>
</dbReference>
<dbReference type="UniPathway" id="UPA00113">
    <property type="reaction ID" value="UER00533"/>
</dbReference>
<dbReference type="UniPathway" id="UPA00973"/>
<dbReference type="Proteomes" id="UP000001971">
    <property type="component" value="Chromosome"/>
</dbReference>
<dbReference type="GO" id="GO:0005737">
    <property type="term" value="C:cytoplasm"/>
    <property type="evidence" value="ECO:0007669"/>
    <property type="project" value="UniProtKB-SubCell"/>
</dbReference>
<dbReference type="GO" id="GO:0016020">
    <property type="term" value="C:membrane"/>
    <property type="evidence" value="ECO:0007669"/>
    <property type="project" value="GOC"/>
</dbReference>
<dbReference type="GO" id="GO:0019134">
    <property type="term" value="F:glucosamine-1-phosphate N-acetyltransferase activity"/>
    <property type="evidence" value="ECO:0007669"/>
    <property type="project" value="UniProtKB-UniRule"/>
</dbReference>
<dbReference type="GO" id="GO:0000287">
    <property type="term" value="F:magnesium ion binding"/>
    <property type="evidence" value="ECO:0007669"/>
    <property type="project" value="UniProtKB-UniRule"/>
</dbReference>
<dbReference type="GO" id="GO:0003977">
    <property type="term" value="F:UDP-N-acetylglucosamine diphosphorylase activity"/>
    <property type="evidence" value="ECO:0007669"/>
    <property type="project" value="UniProtKB-UniRule"/>
</dbReference>
<dbReference type="GO" id="GO:0000902">
    <property type="term" value="P:cell morphogenesis"/>
    <property type="evidence" value="ECO:0007669"/>
    <property type="project" value="UniProtKB-UniRule"/>
</dbReference>
<dbReference type="GO" id="GO:0071555">
    <property type="term" value="P:cell wall organization"/>
    <property type="evidence" value="ECO:0007669"/>
    <property type="project" value="UniProtKB-KW"/>
</dbReference>
<dbReference type="GO" id="GO:0009245">
    <property type="term" value="P:lipid A biosynthetic process"/>
    <property type="evidence" value="ECO:0007669"/>
    <property type="project" value="UniProtKB-UniRule"/>
</dbReference>
<dbReference type="GO" id="GO:0009252">
    <property type="term" value="P:peptidoglycan biosynthetic process"/>
    <property type="evidence" value="ECO:0007669"/>
    <property type="project" value="UniProtKB-UniRule"/>
</dbReference>
<dbReference type="GO" id="GO:0008360">
    <property type="term" value="P:regulation of cell shape"/>
    <property type="evidence" value="ECO:0007669"/>
    <property type="project" value="UniProtKB-KW"/>
</dbReference>
<dbReference type="GO" id="GO:0006048">
    <property type="term" value="P:UDP-N-acetylglucosamine biosynthetic process"/>
    <property type="evidence" value="ECO:0007669"/>
    <property type="project" value="UniProtKB-UniPathway"/>
</dbReference>
<dbReference type="CDD" id="cd02540">
    <property type="entry name" value="GT2_GlmU_N_bac"/>
    <property type="match status" value="1"/>
</dbReference>
<dbReference type="CDD" id="cd03353">
    <property type="entry name" value="LbH_GlmU_C"/>
    <property type="match status" value="1"/>
</dbReference>
<dbReference type="FunFam" id="2.160.10.10:FF:000011">
    <property type="entry name" value="Bifunctional protein GlmU"/>
    <property type="match status" value="1"/>
</dbReference>
<dbReference type="FunFam" id="3.90.550.10:FF:000006">
    <property type="entry name" value="Bifunctional protein GlmU"/>
    <property type="match status" value="1"/>
</dbReference>
<dbReference type="Gene3D" id="2.160.10.10">
    <property type="entry name" value="Hexapeptide repeat proteins"/>
    <property type="match status" value="1"/>
</dbReference>
<dbReference type="Gene3D" id="3.90.550.10">
    <property type="entry name" value="Spore Coat Polysaccharide Biosynthesis Protein SpsA, Chain A"/>
    <property type="match status" value="1"/>
</dbReference>
<dbReference type="HAMAP" id="MF_01631">
    <property type="entry name" value="GlmU"/>
    <property type="match status" value="1"/>
</dbReference>
<dbReference type="InterPro" id="IPR005882">
    <property type="entry name" value="Bifunctional_GlmU"/>
</dbReference>
<dbReference type="InterPro" id="IPR050065">
    <property type="entry name" value="GlmU-like"/>
</dbReference>
<dbReference type="InterPro" id="IPR038009">
    <property type="entry name" value="GlmU_C_LbH"/>
</dbReference>
<dbReference type="InterPro" id="IPR001451">
    <property type="entry name" value="Hexapep"/>
</dbReference>
<dbReference type="InterPro" id="IPR018357">
    <property type="entry name" value="Hexapep_transf_CS"/>
</dbReference>
<dbReference type="InterPro" id="IPR025877">
    <property type="entry name" value="MobA-like_NTP_Trfase"/>
</dbReference>
<dbReference type="InterPro" id="IPR029044">
    <property type="entry name" value="Nucleotide-diphossugar_trans"/>
</dbReference>
<dbReference type="InterPro" id="IPR011004">
    <property type="entry name" value="Trimer_LpxA-like_sf"/>
</dbReference>
<dbReference type="NCBIfam" id="TIGR01173">
    <property type="entry name" value="glmU"/>
    <property type="match status" value="1"/>
</dbReference>
<dbReference type="NCBIfam" id="NF006986">
    <property type="entry name" value="PRK09451.1"/>
    <property type="match status" value="1"/>
</dbReference>
<dbReference type="PANTHER" id="PTHR43584:SF3">
    <property type="entry name" value="BIFUNCTIONAL PROTEIN GLMU"/>
    <property type="match status" value="1"/>
</dbReference>
<dbReference type="PANTHER" id="PTHR43584">
    <property type="entry name" value="NUCLEOTIDYL TRANSFERASE"/>
    <property type="match status" value="1"/>
</dbReference>
<dbReference type="Pfam" id="PF00132">
    <property type="entry name" value="Hexapep"/>
    <property type="match status" value="1"/>
</dbReference>
<dbReference type="Pfam" id="PF12804">
    <property type="entry name" value="NTP_transf_3"/>
    <property type="match status" value="1"/>
</dbReference>
<dbReference type="SUPFAM" id="SSF53448">
    <property type="entry name" value="Nucleotide-diphospho-sugar transferases"/>
    <property type="match status" value="1"/>
</dbReference>
<dbReference type="SUPFAM" id="SSF51161">
    <property type="entry name" value="Trimeric LpxA-like enzymes"/>
    <property type="match status" value="1"/>
</dbReference>
<dbReference type="PROSITE" id="PS00101">
    <property type="entry name" value="HEXAPEP_TRANSFERASES"/>
    <property type="match status" value="1"/>
</dbReference>
<accession>Q1C097</accession>
<comment type="function">
    <text evidence="1">Catalyzes the last two sequential reactions in the de novo biosynthetic pathway for UDP-N-acetylglucosamine (UDP-GlcNAc). The C-terminal domain catalyzes the transfer of acetyl group from acetyl coenzyme A to glucosamine-1-phosphate (GlcN-1-P) to produce N-acetylglucosamine-1-phosphate (GlcNAc-1-P), which is converted into UDP-GlcNAc by the transfer of uridine 5-monophosphate (from uridine 5-triphosphate), a reaction catalyzed by the N-terminal domain.</text>
</comment>
<comment type="catalytic activity">
    <reaction evidence="1">
        <text>alpha-D-glucosamine 1-phosphate + acetyl-CoA = N-acetyl-alpha-D-glucosamine 1-phosphate + CoA + H(+)</text>
        <dbReference type="Rhea" id="RHEA:13725"/>
        <dbReference type="ChEBI" id="CHEBI:15378"/>
        <dbReference type="ChEBI" id="CHEBI:57287"/>
        <dbReference type="ChEBI" id="CHEBI:57288"/>
        <dbReference type="ChEBI" id="CHEBI:57776"/>
        <dbReference type="ChEBI" id="CHEBI:58516"/>
        <dbReference type="EC" id="2.3.1.157"/>
    </reaction>
</comment>
<comment type="catalytic activity">
    <reaction evidence="1">
        <text>N-acetyl-alpha-D-glucosamine 1-phosphate + UTP + H(+) = UDP-N-acetyl-alpha-D-glucosamine + diphosphate</text>
        <dbReference type="Rhea" id="RHEA:13509"/>
        <dbReference type="ChEBI" id="CHEBI:15378"/>
        <dbReference type="ChEBI" id="CHEBI:33019"/>
        <dbReference type="ChEBI" id="CHEBI:46398"/>
        <dbReference type="ChEBI" id="CHEBI:57705"/>
        <dbReference type="ChEBI" id="CHEBI:57776"/>
        <dbReference type="EC" id="2.7.7.23"/>
    </reaction>
</comment>
<comment type="cofactor">
    <cofactor evidence="1">
        <name>Mg(2+)</name>
        <dbReference type="ChEBI" id="CHEBI:18420"/>
    </cofactor>
    <text evidence="1">Binds 1 Mg(2+) ion per subunit.</text>
</comment>
<comment type="pathway">
    <text evidence="1">Nucleotide-sugar biosynthesis; UDP-N-acetyl-alpha-D-glucosamine biosynthesis; N-acetyl-alpha-D-glucosamine 1-phosphate from alpha-D-glucosamine 6-phosphate (route II): step 2/2.</text>
</comment>
<comment type="pathway">
    <text evidence="1">Nucleotide-sugar biosynthesis; UDP-N-acetyl-alpha-D-glucosamine biosynthesis; UDP-N-acetyl-alpha-D-glucosamine from N-acetyl-alpha-D-glucosamine 1-phosphate: step 1/1.</text>
</comment>
<comment type="pathway">
    <text evidence="1">Bacterial outer membrane biogenesis; LPS lipid A biosynthesis.</text>
</comment>
<comment type="subunit">
    <text evidence="1">Homotrimer.</text>
</comment>
<comment type="subcellular location">
    <subcellularLocation>
        <location evidence="1">Cytoplasm</location>
    </subcellularLocation>
</comment>
<comment type="similarity">
    <text evidence="1">In the N-terminal section; belongs to the N-acetylglucosamine-1-phosphate uridyltransferase family.</text>
</comment>
<comment type="similarity">
    <text evidence="1">In the C-terminal section; belongs to the transferase hexapeptide repeat family.</text>
</comment>
<name>GLMU_YERPA</name>
<proteinExistence type="inferred from homology"/>
<keyword id="KW-0012">Acyltransferase</keyword>
<keyword id="KW-0133">Cell shape</keyword>
<keyword id="KW-0961">Cell wall biogenesis/degradation</keyword>
<keyword id="KW-0963">Cytoplasm</keyword>
<keyword id="KW-0460">Magnesium</keyword>
<keyword id="KW-0479">Metal-binding</keyword>
<keyword id="KW-0511">Multifunctional enzyme</keyword>
<keyword id="KW-0548">Nucleotidyltransferase</keyword>
<keyword id="KW-0573">Peptidoglycan synthesis</keyword>
<keyword id="KW-0677">Repeat</keyword>
<keyword id="KW-0808">Transferase</keyword>